<organism>
    <name type="scientific">Influenza A virus (strain A/Beijing/337/1989 H3N2)</name>
    <dbReference type="NCBI Taxonomy" id="383595"/>
    <lineage>
        <taxon>Viruses</taxon>
        <taxon>Riboviria</taxon>
        <taxon>Orthornavirae</taxon>
        <taxon>Negarnaviricota</taxon>
        <taxon>Polyploviricotina</taxon>
        <taxon>Insthoviricetes</taxon>
        <taxon>Articulavirales</taxon>
        <taxon>Orthomyxoviridae</taxon>
        <taxon>Alphainfluenzavirus</taxon>
        <taxon>Alphainfluenzavirus influenzae</taxon>
        <taxon>Influenza A virus</taxon>
    </lineage>
</organism>
<accession>P69289</accession>
<accession>Q07539</accession>
<accession>Q08029</accession>
<organismHost>
    <name type="scientific">Aves</name>
    <dbReference type="NCBI Taxonomy" id="8782"/>
</organismHost>
<organismHost>
    <name type="scientific">Cetacea</name>
    <name type="common">whales</name>
    <dbReference type="NCBI Taxonomy" id="9721"/>
</organismHost>
<organismHost>
    <name type="scientific">Homo sapiens</name>
    <name type="common">Human</name>
    <dbReference type="NCBI Taxonomy" id="9606"/>
</organismHost>
<organismHost>
    <name type="scientific">Phocidae</name>
    <name type="common">true seals</name>
    <dbReference type="NCBI Taxonomy" id="9709"/>
</organismHost>
<organismHost>
    <name type="scientific">Sus scrofa</name>
    <name type="common">Pig</name>
    <dbReference type="NCBI Taxonomy" id="9823"/>
</organismHost>
<protein>
    <recommendedName>
        <fullName evidence="1">Nucleoprotein</fullName>
    </recommendedName>
    <alternativeName>
        <fullName evidence="1">Nucleocapsid protein</fullName>
        <shortName evidence="1">Protein N</shortName>
    </alternativeName>
</protein>
<proteinExistence type="inferred from homology"/>
<sequence>MASQGTKRSYEQMETDGERQNATEIRASVGKMIDGIGRFYIQMCTELKLSDYEGRLIQNSLTVERMVLSAFDERRNRYLEEHPSAGKDPKKTGGPIYKRVGGRWMRELVLYDKEEIRRIWRQANNGDDATRGLTHMMIWHSNLNDTTYQRTRALVRTGMDPRMCSLMQGSTLPRRSGAAGAAVKGIGTMVMELIRMIKRGINDRNFWRGENGRKTRSAYERMCNILKGKFQTAAQRAMMDQVRESRNPGNAEIEDLIFSARSALILRGSVAHKSCLPACVYGPAVSSGYDFEKEGYSLVGIDPFKLLQNSQVYSLIRPNENPAHKSQLVWMACHSAAFEDLRLLSFIRGTKVSPRGKLSTRGVQIASNENMDNMESSTLELRSRYWAIRTRSGGNTNQQRASAGQISVQPTFSVQRNLPFEKSTVMAAFTGNTEGRTSDMRAEIIRMMEGAKPEEVSFRGRGVFELSDEKATNPIVPSFDMSNEGSYFFGDNAEEYDN</sequence>
<keyword id="KW-0167">Capsid protein</keyword>
<keyword id="KW-1139">Helical capsid protein</keyword>
<keyword id="KW-1048">Host nucleus</keyword>
<keyword id="KW-0945">Host-virus interaction</keyword>
<keyword id="KW-0687">Ribonucleoprotein</keyword>
<keyword id="KW-0694">RNA-binding</keyword>
<keyword id="KW-0543">Viral nucleoprotein</keyword>
<keyword id="KW-1163">Viral penetration into host nucleus</keyword>
<keyword id="KW-0946">Virion</keyword>
<keyword id="KW-1160">Virus entry into host cell</keyword>
<feature type="chain" id="PRO_0000079022" description="Nucleoprotein">
    <location>
        <begin position="1"/>
        <end position="498"/>
    </location>
</feature>
<feature type="region of interest" description="Disordered" evidence="2">
    <location>
        <begin position="1"/>
        <end position="21"/>
    </location>
</feature>
<feature type="short sequence motif" description="Unconventional nuclear localization signal" evidence="1">
    <location>
        <begin position="1"/>
        <end position="18"/>
    </location>
</feature>
<feature type="short sequence motif" description="Bipartite nuclear localization signal" evidence="1">
    <location>
        <begin position="198"/>
        <end position="216"/>
    </location>
</feature>
<feature type="compositionally biased region" description="Basic and acidic residues" evidence="2">
    <location>
        <begin position="8"/>
        <end position="21"/>
    </location>
</feature>
<name>NCAP_I89A0</name>
<comment type="function">
    <text evidence="1">Encapsidates the negative strand viral RNA, protecting it from nucleases. The encapsidated genomic RNA is termed the ribonucleoprotein (RNP) and serves as template for transcription and replication. The RNP needs to be localized in the host nucleus to start an infectious cycle, but is too large to diffuse through the nuclear pore complex. NP comprises at least 2 nuclear localization signals that are responsible for the active RNP import into the nucleus through cellular importin alpha/beta pathway. Later in the infection, nclear export of RNPs are mediated through viral proteins NEP interacting with M1 which binds nucleoproteins. It is possible that nucleoprotein binds directly host exportin-1/XPO1 and plays an active role in RNPs nuclear export. M1 interaction with RNP seems to hide nucleoprotein's nuclear localization signals. Soon after a virion infects a new cell, M1 dissociates from the RNP under acidification of the virion driven by M2 protein. Dissociation of M1 from RNP unmasks nucleoprotein's nuclear localization signals, targeting the RNP to the nucleus.</text>
</comment>
<comment type="subunit">
    <text evidence="1">Homomultimerizes to form the nucleocapsid. May bind host exportin-1/XPO1. Binds to viral genomic RNA. Protein-RNA contacts are mediated by a combination of electrostatic interactions between positively charged residues and the phosphate backbone and planar interactions between aromatic side chains and bases.</text>
</comment>
<comment type="subcellular location">
    <subcellularLocation>
        <location evidence="1">Virion</location>
    </subcellularLocation>
    <subcellularLocation>
        <location evidence="1">Host nucleus</location>
    </subcellularLocation>
</comment>
<comment type="PTM">
    <text evidence="1">Late in virus-infected cells, may be cleaved from a 56-kDa protein to a 53-kDa protein by a cellular caspase. This cleavage might be a marker for the onset of apoptosis in infected cells or have a specific function in virus host interaction.</text>
</comment>
<comment type="similarity">
    <text evidence="1">Belongs to the influenza viruses nucleoprotein family.</text>
</comment>
<reference key="1">
    <citation type="journal article" date="1993" name="J. Virol.">
        <title>Analysis of the evolution and variation of the human influenza A virus nucleoprotein gene from 1933 to 1990.</title>
        <authorList>
            <person name="Shu L.L."/>
            <person name="Bean W.J."/>
            <person name="Webster R.G."/>
        </authorList>
    </citation>
    <scope>NUCLEOTIDE SEQUENCE [GENOMIC RNA]</scope>
</reference>
<dbReference type="EMBL" id="L07374">
    <property type="protein sequence ID" value="AAA51486.1"/>
    <property type="molecule type" value="Genomic_RNA"/>
</dbReference>
<dbReference type="SMR" id="P69289"/>
<dbReference type="GO" id="GO:0019029">
    <property type="term" value="C:helical viral capsid"/>
    <property type="evidence" value="ECO:0007669"/>
    <property type="project" value="UniProtKB-UniRule"/>
</dbReference>
<dbReference type="GO" id="GO:0043657">
    <property type="term" value="C:host cell"/>
    <property type="evidence" value="ECO:0007669"/>
    <property type="project" value="GOC"/>
</dbReference>
<dbReference type="GO" id="GO:0042025">
    <property type="term" value="C:host cell nucleus"/>
    <property type="evidence" value="ECO:0007669"/>
    <property type="project" value="UniProtKB-SubCell"/>
</dbReference>
<dbReference type="GO" id="GO:1990904">
    <property type="term" value="C:ribonucleoprotein complex"/>
    <property type="evidence" value="ECO:0007669"/>
    <property type="project" value="UniProtKB-KW"/>
</dbReference>
<dbReference type="GO" id="GO:0019013">
    <property type="term" value="C:viral nucleocapsid"/>
    <property type="evidence" value="ECO:0007669"/>
    <property type="project" value="UniProtKB-UniRule"/>
</dbReference>
<dbReference type="GO" id="GO:0003723">
    <property type="term" value="F:RNA binding"/>
    <property type="evidence" value="ECO:0007669"/>
    <property type="project" value="UniProtKB-UniRule"/>
</dbReference>
<dbReference type="GO" id="GO:0005198">
    <property type="term" value="F:structural molecule activity"/>
    <property type="evidence" value="ECO:0007669"/>
    <property type="project" value="UniProtKB-UniRule"/>
</dbReference>
<dbReference type="GO" id="GO:0046718">
    <property type="term" value="P:symbiont entry into host cell"/>
    <property type="evidence" value="ECO:0007669"/>
    <property type="project" value="UniProtKB-KW"/>
</dbReference>
<dbReference type="GO" id="GO:0075732">
    <property type="term" value="P:viral penetration into host nucleus"/>
    <property type="evidence" value="ECO:0007669"/>
    <property type="project" value="UniProtKB-UniRule"/>
</dbReference>
<dbReference type="HAMAP" id="MF_04070">
    <property type="entry name" value="INFV_NCAP"/>
    <property type="match status" value="1"/>
</dbReference>
<dbReference type="InterPro" id="IPR002141">
    <property type="entry name" value="Flu_NP"/>
</dbReference>
<dbReference type="Pfam" id="PF00506">
    <property type="entry name" value="Flu_NP"/>
    <property type="match status" value="1"/>
</dbReference>
<dbReference type="SUPFAM" id="SSF161003">
    <property type="entry name" value="flu NP-like"/>
    <property type="match status" value="1"/>
</dbReference>
<gene>
    <name evidence="1" type="primary">NP</name>
</gene>
<evidence type="ECO:0000255" key="1">
    <source>
        <dbReference type="HAMAP-Rule" id="MF_04070"/>
    </source>
</evidence>
<evidence type="ECO:0000256" key="2">
    <source>
        <dbReference type="SAM" id="MobiDB-lite"/>
    </source>
</evidence>